<name>TYPH_MOUSE</name>
<feature type="chain" id="PRO_0000059047" description="Thymidine phosphorylase">
    <location>
        <begin position="1"/>
        <end position="471"/>
    </location>
</feature>
<feature type="region of interest" description="Disordered" evidence="3">
    <location>
        <begin position="1"/>
        <end position="21"/>
    </location>
</feature>
<feature type="compositionally biased region" description="Pro residues" evidence="3">
    <location>
        <begin position="1"/>
        <end position="10"/>
    </location>
</feature>
<feature type="binding site" evidence="1">
    <location>
        <position position="102"/>
    </location>
    <ligand>
        <name>substrate</name>
    </ligand>
</feature>
<feature type="binding site" evidence="1">
    <location>
        <position position="188"/>
    </location>
    <ligand>
        <name>substrate</name>
    </ligand>
</feature>
<feature type="binding site" evidence="1">
    <location>
        <position position="203"/>
    </location>
    <ligand>
        <name>substrate</name>
    </ligand>
</feature>
<feature type="binding site" evidence="1">
    <location>
        <position position="207"/>
    </location>
    <ligand>
        <name>substrate</name>
    </ligand>
</feature>
<feature type="modified residue" description="Phosphothreonine" evidence="2">
    <location>
        <position position="6"/>
    </location>
</feature>
<keyword id="KW-0328">Glycosyltransferase</keyword>
<keyword id="KW-0597">Phosphoprotein</keyword>
<keyword id="KW-1185">Reference proteome</keyword>
<keyword id="KW-0808">Transferase</keyword>
<sequence length="471" mass="49336">MAAPGTPPPSASGGGGGEPRQLPELIRLKRDGGHLREADIRNFVHAVIDGRAQDTQIGAMLMAIRLQGMNLEETSVLTRALAESGQQLEWPKAWHQQLVDKHSTGGVGDKVSLVLAPALAACGCKVPMISGRSLGHTGGTLDKLESIPGFGVTQSPEQMLHILEEVGCCIVGQSAKLVPADGILYAARDVTATVDSVPLITASILSKKAVEGLSTLVVDVKFGGAAVFPDQEKARELAKMLVRVGVSLGLKVAAALTAMDNPLGRSVGHTLEVEEALLCLDGAGPPDLRDLVIRLGGAILWISGQAETQDQGAARVAAALDDGSARRRFQLMLSAQGVDPGLAKALCSGSPTQRRQLLPHAREQEELLAPADGIVECVRALPLARVLHDLGAGRSRAGQPIRPGVGAEVLVDVGQCLSRGTPWLRVHLDGPALSSQQRRTLQGALVLSDRAPFKVPSPFAELVLPPTIAQP</sequence>
<evidence type="ECO:0000250" key="1"/>
<evidence type="ECO:0000250" key="2">
    <source>
        <dbReference type="UniProtKB" id="Q5FVR2"/>
    </source>
</evidence>
<evidence type="ECO:0000256" key="3">
    <source>
        <dbReference type="SAM" id="MobiDB-lite"/>
    </source>
</evidence>
<evidence type="ECO:0000305" key="4"/>
<comment type="function">
    <text evidence="1">Catalyzes the reversible phosphorolysis of thymidine. The produced molecules are then utilized as carbon and energy sources or in the rescue of pyrimidine bases for nucleotide synthesis (By similarity).</text>
</comment>
<comment type="catalytic activity">
    <reaction>
        <text>thymidine + phosphate = 2-deoxy-alpha-D-ribose 1-phosphate + thymine</text>
        <dbReference type="Rhea" id="RHEA:16037"/>
        <dbReference type="ChEBI" id="CHEBI:17748"/>
        <dbReference type="ChEBI" id="CHEBI:17821"/>
        <dbReference type="ChEBI" id="CHEBI:43474"/>
        <dbReference type="ChEBI" id="CHEBI:57259"/>
        <dbReference type="EC" id="2.4.2.4"/>
    </reaction>
</comment>
<comment type="pathway">
    <text>Pyrimidine metabolism; dTMP biosynthesis via salvage pathway; dTMP from thymine: step 1/2.</text>
</comment>
<comment type="subunit">
    <text evidence="1">Homodimer.</text>
</comment>
<comment type="similarity">
    <text evidence="4">Belongs to the thymidine/pyrimidine-nucleoside phosphorylase family.</text>
</comment>
<gene>
    <name type="primary">Tymp</name>
    <name type="synonym">Ecgf1</name>
</gene>
<protein>
    <recommendedName>
        <fullName>Thymidine phosphorylase</fullName>
        <shortName>TP</shortName>
        <ecNumber>2.4.2.4</ecNumber>
    </recommendedName>
    <alternativeName>
        <fullName>TdRPase</fullName>
    </alternativeName>
</protein>
<reference key="1">
    <citation type="submission" date="2001-04" db="EMBL/GenBank/DDBJ databases">
        <title>Mouse thymidine phosphorylase.</title>
        <authorList>
            <person name="Ishikawa F."/>
            <person name="Toyoshima H."/>
            <person name="Miyazono K."/>
            <person name="Haraguchi M."/>
        </authorList>
    </citation>
    <scope>NUCLEOTIDE SEQUENCE [MRNA]</scope>
</reference>
<accession>Q99N42</accession>
<dbReference type="EC" id="2.4.2.4"/>
<dbReference type="EMBL" id="AB060274">
    <property type="protein sequence ID" value="BAB41208.1"/>
    <property type="molecule type" value="mRNA"/>
</dbReference>
<dbReference type="CCDS" id="CCDS27747.1"/>
<dbReference type="RefSeq" id="NP_612175.1">
    <property type="nucleotide sequence ID" value="NM_138302.3"/>
</dbReference>
<dbReference type="SMR" id="Q99N42"/>
<dbReference type="FunCoup" id="Q99N42">
    <property type="interactions" value="208"/>
</dbReference>
<dbReference type="STRING" id="10090.ENSMUSP00000023285"/>
<dbReference type="BindingDB" id="Q99N42"/>
<dbReference type="ChEMBL" id="CHEMBL2606"/>
<dbReference type="iPTMnet" id="Q99N42"/>
<dbReference type="PhosphoSitePlus" id="Q99N42"/>
<dbReference type="jPOST" id="Q99N42"/>
<dbReference type="PaxDb" id="10090-ENSMUSP00000023285"/>
<dbReference type="PeptideAtlas" id="Q99N42"/>
<dbReference type="ProteomicsDB" id="298078"/>
<dbReference type="Antibodypedia" id="253">
    <property type="antibodies" value="891 antibodies from 36 providers"/>
</dbReference>
<dbReference type="DNASU" id="72962"/>
<dbReference type="Ensembl" id="ENSMUST00000023285.5">
    <property type="protein sequence ID" value="ENSMUSP00000023285.5"/>
    <property type="gene ID" value="ENSMUSG00000022615.8"/>
</dbReference>
<dbReference type="GeneID" id="72962"/>
<dbReference type="KEGG" id="mmu:72962"/>
<dbReference type="UCSC" id="uc007xgl.2">
    <property type="organism name" value="mouse"/>
</dbReference>
<dbReference type="AGR" id="MGI:1920212"/>
<dbReference type="CTD" id="1890"/>
<dbReference type="MGI" id="MGI:1920212">
    <property type="gene designation" value="Tymp"/>
</dbReference>
<dbReference type="VEuPathDB" id="HostDB:ENSMUSG00000022615"/>
<dbReference type="eggNOG" id="ENOG502QPRY">
    <property type="taxonomic scope" value="Eukaryota"/>
</dbReference>
<dbReference type="GeneTree" id="ENSGT00390000009250"/>
<dbReference type="HOGENOM" id="CLU_025040_0_2_1"/>
<dbReference type="InParanoid" id="Q99N42"/>
<dbReference type="OMA" id="VWGGATN"/>
<dbReference type="OrthoDB" id="445007at2759"/>
<dbReference type="PhylomeDB" id="Q99N42"/>
<dbReference type="TreeFam" id="TF332198"/>
<dbReference type="BRENDA" id="2.4.2.4">
    <property type="organism ID" value="3474"/>
</dbReference>
<dbReference type="Reactome" id="R-MMU-73614">
    <property type="pathway name" value="Pyrimidine salvage"/>
</dbReference>
<dbReference type="Reactome" id="R-MMU-73621">
    <property type="pathway name" value="Pyrimidine catabolism"/>
</dbReference>
<dbReference type="SABIO-RK" id="Q99N42"/>
<dbReference type="UniPathway" id="UPA00578">
    <property type="reaction ID" value="UER00638"/>
</dbReference>
<dbReference type="BioGRID-ORCS" id="72962">
    <property type="hits" value="2 hits in 63 CRISPR screens"/>
</dbReference>
<dbReference type="ChiTaRS" id="Tymp">
    <property type="organism name" value="mouse"/>
</dbReference>
<dbReference type="PRO" id="PR:Q99N42"/>
<dbReference type="Proteomes" id="UP000000589">
    <property type="component" value="Chromosome 15"/>
</dbReference>
<dbReference type="RNAct" id="Q99N42">
    <property type="molecule type" value="protein"/>
</dbReference>
<dbReference type="Bgee" id="ENSMUSG00000022615">
    <property type="expression patterns" value="Expressed in liver and 80 other cell types or tissues"/>
</dbReference>
<dbReference type="GO" id="GO:0004645">
    <property type="term" value="F:1,4-alpha-oligoglucan phosphorylase activity"/>
    <property type="evidence" value="ECO:0000304"/>
    <property type="project" value="MGI"/>
</dbReference>
<dbReference type="GO" id="GO:0042803">
    <property type="term" value="F:protein homodimerization activity"/>
    <property type="evidence" value="ECO:0007669"/>
    <property type="project" value="Ensembl"/>
</dbReference>
<dbReference type="GO" id="GO:0009032">
    <property type="term" value="F:thymidine phosphorylase activity"/>
    <property type="evidence" value="ECO:0000315"/>
    <property type="project" value="MGI"/>
</dbReference>
<dbReference type="GO" id="GO:0009887">
    <property type="term" value="P:animal organ morphogenesis"/>
    <property type="evidence" value="ECO:0000304"/>
    <property type="project" value="MGI"/>
</dbReference>
<dbReference type="GO" id="GO:0006935">
    <property type="term" value="P:chemotaxis"/>
    <property type="evidence" value="ECO:0000304"/>
    <property type="project" value="MGI"/>
</dbReference>
<dbReference type="GO" id="GO:0046074">
    <property type="term" value="P:dTMP catabolic process"/>
    <property type="evidence" value="ECO:0000315"/>
    <property type="project" value="MGI"/>
</dbReference>
<dbReference type="GO" id="GO:0000002">
    <property type="term" value="P:mitochondrial genome maintenance"/>
    <property type="evidence" value="ECO:0007669"/>
    <property type="project" value="Ensembl"/>
</dbReference>
<dbReference type="GO" id="GO:0006206">
    <property type="term" value="P:pyrimidine nucleobase metabolic process"/>
    <property type="evidence" value="ECO:0007669"/>
    <property type="project" value="InterPro"/>
</dbReference>
<dbReference type="GO" id="GO:0006213">
    <property type="term" value="P:pyrimidine nucleoside metabolic process"/>
    <property type="evidence" value="ECO:0007669"/>
    <property type="project" value="Ensembl"/>
</dbReference>
<dbReference type="GO" id="GO:1905333">
    <property type="term" value="P:regulation of gastric motility"/>
    <property type="evidence" value="ECO:0007669"/>
    <property type="project" value="Ensembl"/>
</dbReference>
<dbReference type="GO" id="GO:0031641">
    <property type="term" value="P:regulation of myelination"/>
    <property type="evidence" value="ECO:0007669"/>
    <property type="project" value="Ensembl"/>
</dbReference>
<dbReference type="GO" id="GO:0051969">
    <property type="term" value="P:regulation of transmission of nerve impulse"/>
    <property type="evidence" value="ECO:0007669"/>
    <property type="project" value="Ensembl"/>
</dbReference>
<dbReference type="FunFam" id="3.40.1030.10:FF:000003">
    <property type="entry name" value="Pyrimidine-nucleoside phosphorylase"/>
    <property type="match status" value="1"/>
</dbReference>
<dbReference type="FunFam" id="1.20.970.10:FF:000011">
    <property type="entry name" value="Thymidine phosphorylase"/>
    <property type="match status" value="1"/>
</dbReference>
<dbReference type="FunFam" id="3.90.1170.30:FF:000003">
    <property type="entry name" value="Thymidine phosphorylase"/>
    <property type="match status" value="1"/>
</dbReference>
<dbReference type="Gene3D" id="3.40.1030.10">
    <property type="entry name" value="Nucleoside phosphorylase/phosphoribosyltransferase catalytic domain"/>
    <property type="match status" value="1"/>
</dbReference>
<dbReference type="Gene3D" id="3.90.1170.30">
    <property type="entry name" value="Pyrimidine nucleoside phosphorylase-like, C-terminal domain"/>
    <property type="match status" value="1"/>
</dbReference>
<dbReference type="Gene3D" id="1.20.970.10">
    <property type="entry name" value="Transferase, Pyrimidine Nucleoside Phosphorylase, Chain C"/>
    <property type="match status" value="1"/>
</dbReference>
<dbReference type="InterPro" id="IPR000312">
    <property type="entry name" value="Glycosyl_Trfase_fam3"/>
</dbReference>
<dbReference type="InterPro" id="IPR017459">
    <property type="entry name" value="Glycosyl_Trfase_fam3_N_dom"/>
</dbReference>
<dbReference type="InterPro" id="IPR036320">
    <property type="entry name" value="Glycosyl_Trfase_fam3_N_dom_sf"/>
</dbReference>
<dbReference type="InterPro" id="IPR035902">
    <property type="entry name" value="Nuc_phospho_transferase"/>
</dbReference>
<dbReference type="InterPro" id="IPR036566">
    <property type="entry name" value="PYNP-like_C_sf"/>
</dbReference>
<dbReference type="InterPro" id="IPR013102">
    <property type="entry name" value="PYNP_C"/>
</dbReference>
<dbReference type="InterPro" id="IPR018090">
    <property type="entry name" value="Pyrmidine_PPas_bac/euk"/>
</dbReference>
<dbReference type="InterPro" id="IPR000053">
    <property type="entry name" value="Thymidine/pyrmidine_PPase"/>
</dbReference>
<dbReference type="NCBIfam" id="NF004490">
    <property type="entry name" value="PRK05820.1"/>
    <property type="match status" value="1"/>
</dbReference>
<dbReference type="NCBIfam" id="TIGR02644">
    <property type="entry name" value="Y_phosphoryl"/>
    <property type="match status" value="1"/>
</dbReference>
<dbReference type="PANTHER" id="PTHR10515">
    <property type="entry name" value="THYMIDINE PHOSPHORYLASE"/>
    <property type="match status" value="1"/>
</dbReference>
<dbReference type="PANTHER" id="PTHR10515:SF0">
    <property type="entry name" value="THYMIDINE PHOSPHORYLASE"/>
    <property type="match status" value="1"/>
</dbReference>
<dbReference type="Pfam" id="PF02885">
    <property type="entry name" value="Glycos_trans_3N"/>
    <property type="match status" value="1"/>
</dbReference>
<dbReference type="Pfam" id="PF00591">
    <property type="entry name" value="Glycos_transf_3"/>
    <property type="match status" value="1"/>
</dbReference>
<dbReference type="Pfam" id="PF07831">
    <property type="entry name" value="PYNP_C"/>
    <property type="match status" value="1"/>
</dbReference>
<dbReference type="PIRSF" id="PIRSF000478">
    <property type="entry name" value="TP_PyNP"/>
    <property type="match status" value="1"/>
</dbReference>
<dbReference type="SMART" id="SM00941">
    <property type="entry name" value="PYNP_C"/>
    <property type="match status" value="1"/>
</dbReference>
<dbReference type="SUPFAM" id="SSF52418">
    <property type="entry name" value="Nucleoside phosphorylase/phosphoribosyltransferase catalytic domain"/>
    <property type="match status" value="1"/>
</dbReference>
<dbReference type="SUPFAM" id="SSF47648">
    <property type="entry name" value="Nucleoside phosphorylase/phosphoribosyltransferase N-terminal domain"/>
    <property type="match status" value="1"/>
</dbReference>
<dbReference type="SUPFAM" id="SSF54680">
    <property type="entry name" value="Pyrimidine nucleoside phosphorylase C-terminal domain"/>
    <property type="match status" value="1"/>
</dbReference>
<proteinExistence type="evidence at transcript level"/>
<organism>
    <name type="scientific">Mus musculus</name>
    <name type="common">Mouse</name>
    <dbReference type="NCBI Taxonomy" id="10090"/>
    <lineage>
        <taxon>Eukaryota</taxon>
        <taxon>Metazoa</taxon>
        <taxon>Chordata</taxon>
        <taxon>Craniata</taxon>
        <taxon>Vertebrata</taxon>
        <taxon>Euteleostomi</taxon>
        <taxon>Mammalia</taxon>
        <taxon>Eutheria</taxon>
        <taxon>Euarchontoglires</taxon>
        <taxon>Glires</taxon>
        <taxon>Rodentia</taxon>
        <taxon>Myomorpha</taxon>
        <taxon>Muroidea</taxon>
        <taxon>Muridae</taxon>
        <taxon>Murinae</taxon>
        <taxon>Mus</taxon>
        <taxon>Mus</taxon>
    </lineage>
</organism>